<organism>
    <name type="scientific">Xenopus laevis</name>
    <name type="common">African clawed frog</name>
    <dbReference type="NCBI Taxonomy" id="8355"/>
    <lineage>
        <taxon>Eukaryota</taxon>
        <taxon>Metazoa</taxon>
        <taxon>Chordata</taxon>
        <taxon>Craniata</taxon>
        <taxon>Vertebrata</taxon>
        <taxon>Euteleostomi</taxon>
        <taxon>Amphibia</taxon>
        <taxon>Batrachia</taxon>
        <taxon>Anura</taxon>
        <taxon>Pipoidea</taxon>
        <taxon>Pipidae</taxon>
        <taxon>Xenopodinae</taxon>
        <taxon>Xenopus</taxon>
        <taxon>Xenopus</taxon>
    </lineage>
</organism>
<evidence type="ECO:0000250" key="1">
    <source>
        <dbReference type="UniProtKB" id="P62195"/>
    </source>
</evidence>
<evidence type="ECO:0000255" key="2"/>
<evidence type="ECO:0000305" key="3"/>
<comment type="function">
    <text evidence="1">The 26S proteasome is involved in the ATP-dependent degradation of ubiquitinated proteins (By similarity). The regulatory (or ATPase) complex confers ATP dependency and substrate specificity to the 26S complex (By similarity).</text>
</comment>
<comment type="subcellular location">
    <subcellularLocation>
        <location evidence="3">Cytoplasm</location>
    </subcellularLocation>
    <subcellularLocation>
        <location evidence="3">Nucleus</location>
    </subcellularLocation>
</comment>
<comment type="similarity">
    <text evidence="3">Belongs to the AAA ATPase family.</text>
</comment>
<dbReference type="EMBL" id="X81986">
    <property type="protein sequence ID" value="CAA57512.1"/>
    <property type="molecule type" value="mRNA"/>
</dbReference>
<dbReference type="RefSeq" id="NP_001081635.1">
    <property type="nucleotide sequence ID" value="NM_001088166.1"/>
</dbReference>
<dbReference type="BMRB" id="P46470"/>
<dbReference type="SMR" id="P46470"/>
<dbReference type="BioGRID" id="99304">
    <property type="interactions" value="3"/>
</dbReference>
<dbReference type="GeneID" id="397968"/>
<dbReference type="KEGG" id="xla:397968"/>
<dbReference type="AGR" id="Xenbase:XB-GENE-17338635"/>
<dbReference type="CTD" id="397968"/>
<dbReference type="Xenbase" id="XB-GENE-17338635">
    <property type="gene designation" value="psmc5.S"/>
</dbReference>
<dbReference type="OrthoDB" id="1154031at2759"/>
<dbReference type="CD-CODE" id="78E86D56">
    <property type="entry name" value="Mitochondrial cloud"/>
</dbReference>
<dbReference type="Proteomes" id="UP000186698">
    <property type="component" value="Chromosome 9_10S"/>
</dbReference>
<dbReference type="Bgee" id="397968">
    <property type="expression patterns" value="Expressed in neurula embryo and 19 other cell types or tissues"/>
</dbReference>
<dbReference type="GO" id="GO:0005737">
    <property type="term" value="C:cytoplasm"/>
    <property type="evidence" value="ECO:0007669"/>
    <property type="project" value="UniProtKB-SubCell"/>
</dbReference>
<dbReference type="GO" id="GO:0005634">
    <property type="term" value="C:nucleus"/>
    <property type="evidence" value="ECO:0007669"/>
    <property type="project" value="UniProtKB-SubCell"/>
</dbReference>
<dbReference type="GO" id="GO:0022624">
    <property type="term" value="C:proteasome accessory complex"/>
    <property type="evidence" value="ECO:0000250"/>
    <property type="project" value="UniProtKB"/>
</dbReference>
<dbReference type="GO" id="GO:0008540">
    <property type="term" value="C:proteasome regulatory particle, base subcomplex"/>
    <property type="evidence" value="ECO:0000318"/>
    <property type="project" value="GO_Central"/>
</dbReference>
<dbReference type="GO" id="GO:0005524">
    <property type="term" value="F:ATP binding"/>
    <property type="evidence" value="ECO:0007669"/>
    <property type="project" value="UniProtKB-KW"/>
</dbReference>
<dbReference type="GO" id="GO:0016887">
    <property type="term" value="F:ATP hydrolysis activity"/>
    <property type="evidence" value="ECO:0007669"/>
    <property type="project" value="InterPro"/>
</dbReference>
<dbReference type="GO" id="GO:0036402">
    <property type="term" value="F:proteasome-activating activity"/>
    <property type="evidence" value="ECO:0000318"/>
    <property type="project" value="GO_Central"/>
</dbReference>
<dbReference type="GO" id="GO:0043161">
    <property type="term" value="P:proteasome-mediated ubiquitin-dependent protein catabolic process"/>
    <property type="evidence" value="ECO:0000318"/>
    <property type="project" value="GO_Central"/>
</dbReference>
<dbReference type="CDD" id="cd19502">
    <property type="entry name" value="RecA-like_PAN_like"/>
    <property type="match status" value="1"/>
</dbReference>
<dbReference type="FunFam" id="1.10.8.60:FF:000006">
    <property type="entry name" value="26S protease regulatory subunit 8"/>
    <property type="match status" value="1"/>
</dbReference>
<dbReference type="FunFam" id="2.40.50.140:FF:000044">
    <property type="entry name" value="26S protease regulatory subunit 8"/>
    <property type="match status" value="1"/>
</dbReference>
<dbReference type="FunFam" id="3.40.50.300:FF:000030">
    <property type="entry name" value="26S protease regulatory subunit 8"/>
    <property type="match status" value="1"/>
</dbReference>
<dbReference type="Gene3D" id="1.10.8.60">
    <property type="match status" value="1"/>
</dbReference>
<dbReference type="Gene3D" id="2.40.50.140">
    <property type="entry name" value="Nucleic acid-binding proteins"/>
    <property type="match status" value="1"/>
</dbReference>
<dbReference type="Gene3D" id="3.40.50.300">
    <property type="entry name" value="P-loop containing nucleotide triphosphate hydrolases"/>
    <property type="match status" value="1"/>
</dbReference>
<dbReference type="InterPro" id="IPR050221">
    <property type="entry name" value="26S_Proteasome_ATPase"/>
</dbReference>
<dbReference type="InterPro" id="IPR003593">
    <property type="entry name" value="AAA+_ATPase"/>
</dbReference>
<dbReference type="InterPro" id="IPR041569">
    <property type="entry name" value="AAA_lid_3"/>
</dbReference>
<dbReference type="InterPro" id="IPR003959">
    <property type="entry name" value="ATPase_AAA_core"/>
</dbReference>
<dbReference type="InterPro" id="IPR003960">
    <property type="entry name" value="ATPase_AAA_CS"/>
</dbReference>
<dbReference type="InterPro" id="IPR012340">
    <property type="entry name" value="NA-bd_OB-fold"/>
</dbReference>
<dbReference type="InterPro" id="IPR027417">
    <property type="entry name" value="P-loop_NTPase"/>
</dbReference>
<dbReference type="InterPro" id="IPR032501">
    <property type="entry name" value="Prot_ATP_ID_OB_2nd"/>
</dbReference>
<dbReference type="PANTHER" id="PTHR23073">
    <property type="entry name" value="26S PROTEASOME REGULATORY SUBUNIT"/>
    <property type="match status" value="1"/>
</dbReference>
<dbReference type="Pfam" id="PF00004">
    <property type="entry name" value="AAA"/>
    <property type="match status" value="1"/>
</dbReference>
<dbReference type="Pfam" id="PF17862">
    <property type="entry name" value="AAA_lid_3"/>
    <property type="match status" value="1"/>
</dbReference>
<dbReference type="Pfam" id="PF16450">
    <property type="entry name" value="Prot_ATP_ID_OB_C"/>
    <property type="match status" value="1"/>
</dbReference>
<dbReference type="SMART" id="SM00382">
    <property type="entry name" value="AAA"/>
    <property type="match status" value="1"/>
</dbReference>
<dbReference type="SUPFAM" id="SSF52540">
    <property type="entry name" value="P-loop containing nucleoside triphosphate hydrolases"/>
    <property type="match status" value="1"/>
</dbReference>
<dbReference type="PROSITE" id="PS00674">
    <property type="entry name" value="AAA"/>
    <property type="match status" value="1"/>
</dbReference>
<name>PRS8_XENLA</name>
<protein>
    <recommendedName>
        <fullName>26S proteasome regulatory subunit 8</fullName>
    </recommendedName>
    <alternativeName>
        <fullName>26S proteasome AAA-ATPase subunit RPT6</fullName>
    </alternativeName>
    <alternativeName>
        <fullName>Proteasome 26S subunit ATPase 5</fullName>
    </alternativeName>
    <alternativeName>
        <fullName>SUG1 homolog</fullName>
        <shortName>xSUG1</shortName>
    </alternativeName>
</protein>
<feature type="chain" id="PRO_0000084725" description="26S proteasome regulatory subunit 8">
    <location>
        <begin position="1"/>
        <end position="461"/>
    </location>
</feature>
<feature type="binding site" evidence="2">
    <location>
        <begin position="185"/>
        <end position="192"/>
    </location>
    <ligand>
        <name>ATP</name>
        <dbReference type="ChEBI" id="CHEBI:30616"/>
    </ligand>
</feature>
<proteinExistence type="evidence at transcript level"/>
<accession>P46470</accession>
<accession>P79961</accession>
<reference key="1">
    <citation type="submission" date="1994-07" db="EMBL/GenBank/DDBJ databases">
        <authorList>
            <person name="Nacken W.K.F."/>
            <person name="Kingsman A."/>
            <person name="Kingsman S."/>
            <person name="Sablitzky F."/>
            <person name="Sorg C."/>
        </authorList>
    </citation>
    <scope>NUCLEOTIDE SEQUENCE [MRNA]</scope>
    <source>
        <tissue>Ovary</tissue>
    </source>
</reference>
<reference key="2">
    <citation type="submission" date="1997-03" db="EMBL/GenBank/DDBJ databases">
        <authorList>
            <person name="Nacken W.K.F."/>
            <person name="Sorg C."/>
        </authorList>
    </citation>
    <scope>SEQUENCE REVISION</scope>
</reference>
<keyword id="KW-0067">ATP-binding</keyword>
<keyword id="KW-0963">Cytoplasm</keyword>
<keyword id="KW-0547">Nucleotide-binding</keyword>
<keyword id="KW-0539">Nucleus</keyword>
<keyword id="KW-0647">Proteasome</keyword>
<keyword id="KW-1185">Reference proteome</keyword>
<gene>
    <name type="primary">psmc5</name>
    <name type="synonym">sug1</name>
</gene>
<sequence>MEQMEMDESRGGTGLRQYYLSKIEDLQLVVNDKSQNLRRLQAQRNELNAKVRLLREELQLLQEQGSYVGEVVRAMDKKKVLVKVHPEGKFVVDVDKNIDINDVTPNCRVALRNDSYTLHKILPNKVDPLVSLMMVEKVPDSTYEMIGGLDKQIKEIKEVIELPVKHPEHFEALGIAQPKGVLLYGPPGTGKTLLARAVAHHTDCTFIRVSGSELVQKFIGEGARMVRELFVMAREHAPSIIFMDEIDSIGSRLEGGSGGDSEVQRTMLELLNQLDGFEATKNIKVIMATNRIDILDSALLRPGRIDRKIEFPPPNEEARLDILKIHSRKMNLTRGINLRKIAELMPGASGAEVKGVCTEAGMYALRERRVHVTQEDFEMAVAKVMQKDSEKNMSIKKLWKCFFLVPILCSTVCFQLKPSDVYYMGAWLIKPTRFNRRIITNSYHLQIFKPTIVLANGECHN</sequence>